<reference key="1">
    <citation type="journal article" date="2009" name="J. Bacteriol.">
        <title>Genomic sequencing reveals regulatory mutations and recombinational events in the widely used MC4100 lineage of Escherichia coli K-12.</title>
        <authorList>
            <person name="Ferenci T."/>
            <person name="Zhou Z."/>
            <person name="Betteridge T."/>
            <person name="Ren Y."/>
            <person name="Liu Y."/>
            <person name="Feng L."/>
            <person name="Reeves P.R."/>
            <person name="Wang L."/>
        </authorList>
    </citation>
    <scope>NUCLEOTIDE SEQUENCE [LARGE SCALE GENOMIC DNA]</scope>
    <source>
        <strain>K12 / MC4100 / BW2952</strain>
    </source>
</reference>
<sequence length="292" mass="32566">MNNHFKCIGIVGHPRHPTALTTHEMLYRWLCTKGYEVIVEQQIAHELQLKNVKTGTLAEIGQLADLAVVVGGDGNMLGAARTLARYDIKVIGINRGNLGFLTDLDPDNAQQQLADVLEGHYISEKRFLLEAQVCQQDCQKRISTAINEVVLHPGKVAHMIEFEVYIDEIFAFSQRSDGLIISTPTGSTAYSLSAGGPILTPSLDAITLVPMFPHTLSARPLVINSSSTIRLRFSHRRNDLEISCDSQIALPIQEGEDVLIRRCDYHLNLIHPKDYSYFNTLSTKLGWSKKLF</sequence>
<evidence type="ECO:0000255" key="1">
    <source>
        <dbReference type="HAMAP-Rule" id="MF_00361"/>
    </source>
</evidence>
<proteinExistence type="inferred from homology"/>
<feature type="chain" id="PRO_1000205413" description="NAD kinase">
    <location>
        <begin position="1"/>
        <end position="292"/>
    </location>
</feature>
<feature type="active site" description="Proton acceptor" evidence="1">
    <location>
        <position position="73"/>
    </location>
</feature>
<feature type="binding site" evidence="1">
    <location>
        <begin position="73"/>
        <end position="74"/>
    </location>
    <ligand>
        <name>NAD(+)</name>
        <dbReference type="ChEBI" id="CHEBI:57540"/>
    </ligand>
</feature>
<feature type="binding site" evidence="1">
    <location>
        <begin position="147"/>
        <end position="148"/>
    </location>
    <ligand>
        <name>NAD(+)</name>
        <dbReference type="ChEBI" id="CHEBI:57540"/>
    </ligand>
</feature>
<feature type="binding site" evidence="1">
    <location>
        <position position="158"/>
    </location>
    <ligand>
        <name>NAD(+)</name>
        <dbReference type="ChEBI" id="CHEBI:57540"/>
    </ligand>
</feature>
<feature type="binding site" evidence="1">
    <location>
        <position position="175"/>
    </location>
    <ligand>
        <name>NAD(+)</name>
        <dbReference type="ChEBI" id="CHEBI:57540"/>
    </ligand>
</feature>
<feature type="binding site" evidence="1">
    <location>
        <position position="177"/>
    </location>
    <ligand>
        <name>NAD(+)</name>
        <dbReference type="ChEBI" id="CHEBI:57540"/>
    </ligand>
</feature>
<feature type="binding site" evidence="1">
    <location>
        <begin position="188"/>
        <end position="193"/>
    </location>
    <ligand>
        <name>NAD(+)</name>
        <dbReference type="ChEBI" id="CHEBI:57540"/>
    </ligand>
</feature>
<feature type="binding site" evidence="1">
    <location>
        <position position="247"/>
    </location>
    <ligand>
        <name>NAD(+)</name>
        <dbReference type="ChEBI" id="CHEBI:57540"/>
    </ligand>
</feature>
<protein>
    <recommendedName>
        <fullName evidence="1">NAD kinase</fullName>
        <ecNumber evidence="1">2.7.1.23</ecNumber>
    </recommendedName>
    <alternativeName>
        <fullName evidence="1">ATP-dependent NAD kinase</fullName>
    </alternativeName>
</protein>
<dbReference type="EC" id="2.7.1.23" evidence="1"/>
<dbReference type="EMBL" id="CP001396">
    <property type="protein sequence ID" value="ACR63857.1"/>
    <property type="molecule type" value="Genomic_DNA"/>
</dbReference>
<dbReference type="RefSeq" id="WP_001059169.1">
    <property type="nucleotide sequence ID" value="NC_012759.1"/>
</dbReference>
<dbReference type="SMR" id="C4ZYN2"/>
<dbReference type="GeneID" id="93774464"/>
<dbReference type="KEGG" id="ebw:BWG_2373"/>
<dbReference type="HOGENOM" id="CLU_008831_0_1_6"/>
<dbReference type="GO" id="GO:0005737">
    <property type="term" value="C:cytoplasm"/>
    <property type="evidence" value="ECO:0007669"/>
    <property type="project" value="UniProtKB-SubCell"/>
</dbReference>
<dbReference type="GO" id="GO:0005524">
    <property type="term" value="F:ATP binding"/>
    <property type="evidence" value="ECO:0007669"/>
    <property type="project" value="UniProtKB-KW"/>
</dbReference>
<dbReference type="GO" id="GO:0046872">
    <property type="term" value="F:metal ion binding"/>
    <property type="evidence" value="ECO:0007669"/>
    <property type="project" value="UniProtKB-UniRule"/>
</dbReference>
<dbReference type="GO" id="GO:0051287">
    <property type="term" value="F:NAD binding"/>
    <property type="evidence" value="ECO:0007669"/>
    <property type="project" value="UniProtKB-ARBA"/>
</dbReference>
<dbReference type="GO" id="GO:0003951">
    <property type="term" value="F:NAD+ kinase activity"/>
    <property type="evidence" value="ECO:0007669"/>
    <property type="project" value="UniProtKB-UniRule"/>
</dbReference>
<dbReference type="GO" id="GO:0019674">
    <property type="term" value="P:NAD metabolic process"/>
    <property type="evidence" value="ECO:0007669"/>
    <property type="project" value="InterPro"/>
</dbReference>
<dbReference type="GO" id="GO:0006741">
    <property type="term" value="P:NADP biosynthetic process"/>
    <property type="evidence" value="ECO:0007669"/>
    <property type="project" value="UniProtKB-UniRule"/>
</dbReference>
<dbReference type="FunFam" id="2.60.200.30:FF:000001">
    <property type="entry name" value="NAD kinase"/>
    <property type="match status" value="1"/>
</dbReference>
<dbReference type="FunFam" id="3.40.50.10330:FF:000004">
    <property type="entry name" value="NAD kinase"/>
    <property type="match status" value="1"/>
</dbReference>
<dbReference type="Gene3D" id="3.40.50.10330">
    <property type="entry name" value="Probable inorganic polyphosphate/atp-NAD kinase, domain 1"/>
    <property type="match status" value="1"/>
</dbReference>
<dbReference type="Gene3D" id="2.60.200.30">
    <property type="entry name" value="Probable inorganic polyphosphate/atp-NAD kinase, domain 2"/>
    <property type="match status" value="1"/>
</dbReference>
<dbReference type="HAMAP" id="MF_00361">
    <property type="entry name" value="NAD_kinase"/>
    <property type="match status" value="1"/>
</dbReference>
<dbReference type="InterPro" id="IPR017438">
    <property type="entry name" value="ATP-NAD_kinase_N"/>
</dbReference>
<dbReference type="InterPro" id="IPR017437">
    <property type="entry name" value="ATP-NAD_kinase_PpnK-typ_C"/>
</dbReference>
<dbReference type="InterPro" id="IPR016064">
    <property type="entry name" value="NAD/diacylglycerol_kinase_sf"/>
</dbReference>
<dbReference type="InterPro" id="IPR002504">
    <property type="entry name" value="NADK"/>
</dbReference>
<dbReference type="NCBIfam" id="NF002306">
    <property type="entry name" value="PRK01231.1"/>
    <property type="match status" value="1"/>
</dbReference>
<dbReference type="NCBIfam" id="NF002893">
    <property type="entry name" value="PRK03378.1"/>
    <property type="match status" value="1"/>
</dbReference>
<dbReference type="PANTHER" id="PTHR20275">
    <property type="entry name" value="NAD KINASE"/>
    <property type="match status" value="1"/>
</dbReference>
<dbReference type="PANTHER" id="PTHR20275:SF0">
    <property type="entry name" value="NAD KINASE"/>
    <property type="match status" value="1"/>
</dbReference>
<dbReference type="Pfam" id="PF01513">
    <property type="entry name" value="NAD_kinase"/>
    <property type="match status" value="1"/>
</dbReference>
<dbReference type="Pfam" id="PF20143">
    <property type="entry name" value="NAD_kinase_C"/>
    <property type="match status" value="1"/>
</dbReference>
<dbReference type="SUPFAM" id="SSF111331">
    <property type="entry name" value="NAD kinase/diacylglycerol kinase-like"/>
    <property type="match status" value="1"/>
</dbReference>
<comment type="function">
    <text evidence="1">Involved in the regulation of the intracellular balance of NAD and NADP, and is a key enzyme in the biosynthesis of NADP. Catalyzes specifically the phosphorylation on 2'-hydroxyl of the adenosine moiety of NAD to yield NADP.</text>
</comment>
<comment type="catalytic activity">
    <reaction evidence="1">
        <text>NAD(+) + ATP = ADP + NADP(+) + H(+)</text>
        <dbReference type="Rhea" id="RHEA:18629"/>
        <dbReference type="ChEBI" id="CHEBI:15378"/>
        <dbReference type="ChEBI" id="CHEBI:30616"/>
        <dbReference type="ChEBI" id="CHEBI:57540"/>
        <dbReference type="ChEBI" id="CHEBI:58349"/>
        <dbReference type="ChEBI" id="CHEBI:456216"/>
        <dbReference type="EC" id="2.7.1.23"/>
    </reaction>
</comment>
<comment type="cofactor">
    <cofactor evidence="1">
        <name>a divalent metal cation</name>
        <dbReference type="ChEBI" id="CHEBI:60240"/>
    </cofactor>
</comment>
<comment type="subcellular location">
    <subcellularLocation>
        <location evidence="1">Cytoplasm</location>
    </subcellularLocation>
</comment>
<comment type="similarity">
    <text evidence="1">Belongs to the NAD kinase family.</text>
</comment>
<name>NADK_ECOBW</name>
<keyword id="KW-0067">ATP-binding</keyword>
<keyword id="KW-0963">Cytoplasm</keyword>
<keyword id="KW-0418">Kinase</keyword>
<keyword id="KW-0520">NAD</keyword>
<keyword id="KW-0521">NADP</keyword>
<keyword id="KW-0547">Nucleotide-binding</keyword>
<keyword id="KW-0808">Transferase</keyword>
<gene>
    <name evidence="1" type="primary">nadK</name>
    <name type="ordered locus">BWG_2373</name>
</gene>
<accession>C4ZYN2</accession>
<organism>
    <name type="scientific">Escherichia coli (strain K12 / MC4100 / BW2952)</name>
    <dbReference type="NCBI Taxonomy" id="595496"/>
    <lineage>
        <taxon>Bacteria</taxon>
        <taxon>Pseudomonadati</taxon>
        <taxon>Pseudomonadota</taxon>
        <taxon>Gammaproteobacteria</taxon>
        <taxon>Enterobacterales</taxon>
        <taxon>Enterobacteriaceae</taxon>
        <taxon>Escherichia</taxon>
    </lineage>
</organism>